<accession>B5BDB0</accession>
<evidence type="ECO:0000255" key="1">
    <source>
        <dbReference type="HAMAP-Rule" id="MF_00315"/>
    </source>
</evidence>
<proteinExistence type="inferred from homology"/>
<protein>
    <recommendedName>
        <fullName evidence="1">1-deoxy-D-xylulose-5-phosphate synthase</fullName>
        <ecNumber evidence="1">2.2.1.7</ecNumber>
    </recommendedName>
    <alternativeName>
        <fullName evidence="1">1-deoxyxylulose-5-phosphate synthase</fullName>
        <shortName evidence="1">DXP synthase</shortName>
        <shortName evidence="1">DXPS</shortName>
    </alternativeName>
</protein>
<gene>
    <name evidence="1" type="primary">dxs</name>
    <name type="ordered locus">SSPA2143</name>
</gene>
<feature type="chain" id="PRO_1000115770" description="1-deoxy-D-xylulose-5-phosphate synthase">
    <location>
        <begin position="1"/>
        <end position="620"/>
    </location>
</feature>
<feature type="binding site" evidence="1">
    <location>
        <position position="80"/>
    </location>
    <ligand>
        <name>thiamine diphosphate</name>
        <dbReference type="ChEBI" id="CHEBI:58937"/>
    </ligand>
</feature>
<feature type="binding site" evidence="1">
    <location>
        <begin position="121"/>
        <end position="123"/>
    </location>
    <ligand>
        <name>thiamine diphosphate</name>
        <dbReference type="ChEBI" id="CHEBI:58937"/>
    </ligand>
</feature>
<feature type="binding site" evidence="1">
    <location>
        <position position="152"/>
    </location>
    <ligand>
        <name>Mg(2+)</name>
        <dbReference type="ChEBI" id="CHEBI:18420"/>
    </ligand>
</feature>
<feature type="binding site" evidence="1">
    <location>
        <begin position="153"/>
        <end position="154"/>
    </location>
    <ligand>
        <name>thiamine diphosphate</name>
        <dbReference type="ChEBI" id="CHEBI:58937"/>
    </ligand>
</feature>
<feature type="binding site" evidence="1">
    <location>
        <position position="181"/>
    </location>
    <ligand>
        <name>Mg(2+)</name>
        <dbReference type="ChEBI" id="CHEBI:18420"/>
    </ligand>
</feature>
<feature type="binding site" evidence="1">
    <location>
        <position position="181"/>
    </location>
    <ligand>
        <name>thiamine diphosphate</name>
        <dbReference type="ChEBI" id="CHEBI:58937"/>
    </ligand>
</feature>
<feature type="binding site" evidence="1">
    <location>
        <position position="288"/>
    </location>
    <ligand>
        <name>thiamine diphosphate</name>
        <dbReference type="ChEBI" id="CHEBI:58937"/>
    </ligand>
</feature>
<feature type="binding site" evidence="1">
    <location>
        <position position="370"/>
    </location>
    <ligand>
        <name>thiamine diphosphate</name>
        <dbReference type="ChEBI" id="CHEBI:58937"/>
    </ligand>
</feature>
<comment type="function">
    <text evidence="1">Catalyzes the acyloin condensation reaction between C atoms 2 and 3 of pyruvate and glyceraldehyde 3-phosphate to yield 1-deoxy-D-xylulose-5-phosphate (DXP).</text>
</comment>
<comment type="catalytic activity">
    <reaction evidence="1">
        <text>D-glyceraldehyde 3-phosphate + pyruvate + H(+) = 1-deoxy-D-xylulose 5-phosphate + CO2</text>
        <dbReference type="Rhea" id="RHEA:12605"/>
        <dbReference type="ChEBI" id="CHEBI:15361"/>
        <dbReference type="ChEBI" id="CHEBI:15378"/>
        <dbReference type="ChEBI" id="CHEBI:16526"/>
        <dbReference type="ChEBI" id="CHEBI:57792"/>
        <dbReference type="ChEBI" id="CHEBI:59776"/>
        <dbReference type="EC" id="2.2.1.7"/>
    </reaction>
</comment>
<comment type="cofactor">
    <cofactor evidence="1">
        <name>Mg(2+)</name>
        <dbReference type="ChEBI" id="CHEBI:18420"/>
    </cofactor>
    <text evidence="1">Binds 1 Mg(2+) ion per subunit.</text>
</comment>
<comment type="cofactor">
    <cofactor evidence="1">
        <name>thiamine diphosphate</name>
        <dbReference type="ChEBI" id="CHEBI:58937"/>
    </cofactor>
    <text evidence="1">Binds 1 thiamine pyrophosphate per subunit.</text>
</comment>
<comment type="pathway">
    <text evidence="1">Metabolic intermediate biosynthesis; 1-deoxy-D-xylulose 5-phosphate biosynthesis; 1-deoxy-D-xylulose 5-phosphate from D-glyceraldehyde 3-phosphate and pyruvate: step 1/1.</text>
</comment>
<comment type="subunit">
    <text evidence="1">Homodimer.</text>
</comment>
<comment type="similarity">
    <text evidence="1">Belongs to the transketolase family. DXPS subfamily.</text>
</comment>
<dbReference type="EC" id="2.2.1.7" evidence="1"/>
<dbReference type="EMBL" id="FM200053">
    <property type="protein sequence ID" value="CAR60353.1"/>
    <property type="molecule type" value="Genomic_DNA"/>
</dbReference>
<dbReference type="RefSeq" id="WP_000006771.1">
    <property type="nucleotide sequence ID" value="NC_011147.1"/>
</dbReference>
<dbReference type="SMR" id="B5BDB0"/>
<dbReference type="KEGG" id="sek:SSPA2143"/>
<dbReference type="HOGENOM" id="CLU_009227_1_4_6"/>
<dbReference type="UniPathway" id="UPA00064">
    <property type="reaction ID" value="UER00091"/>
</dbReference>
<dbReference type="Proteomes" id="UP000001869">
    <property type="component" value="Chromosome"/>
</dbReference>
<dbReference type="GO" id="GO:0005829">
    <property type="term" value="C:cytosol"/>
    <property type="evidence" value="ECO:0007669"/>
    <property type="project" value="TreeGrafter"/>
</dbReference>
<dbReference type="GO" id="GO:0008661">
    <property type="term" value="F:1-deoxy-D-xylulose-5-phosphate synthase activity"/>
    <property type="evidence" value="ECO:0007669"/>
    <property type="project" value="UniProtKB-UniRule"/>
</dbReference>
<dbReference type="GO" id="GO:0000287">
    <property type="term" value="F:magnesium ion binding"/>
    <property type="evidence" value="ECO:0007669"/>
    <property type="project" value="UniProtKB-UniRule"/>
</dbReference>
<dbReference type="GO" id="GO:0030976">
    <property type="term" value="F:thiamine pyrophosphate binding"/>
    <property type="evidence" value="ECO:0007669"/>
    <property type="project" value="UniProtKB-UniRule"/>
</dbReference>
<dbReference type="GO" id="GO:0052865">
    <property type="term" value="P:1-deoxy-D-xylulose 5-phosphate biosynthetic process"/>
    <property type="evidence" value="ECO:0007669"/>
    <property type="project" value="UniProtKB-UniPathway"/>
</dbReference>
<dbReference type="GO" id="GO:0019288">
    <property type="term" value="P:isopentenyl diphosphate biosynthetic process, methylerythritol 4-phosphate pathway"/>
    <property type="evidence" value="ECO:0007669"/>
    <property type="project" value="TreeGrafter"/>
</dbReference>
<dbReference type="GO" id="GO:0016114">
    <property type="term" value="P:terpenoid biosynthetic process"/>
    <property type="evidence" value="ECO:0007669"/>
    <property type="project" value="UniProtKB-UniRule"/>
</dbReference>
<dbReference type="GO" id="GO:0009228">
    <property type="term" value="P:thiamine biosynthetic process"/>
    <property type="evidence" value="ECO:0007669"/>
    <property type="project" value="UniProtKB-UniRule"/>
</dbReference>
<dbReference type="CDD" id="cd02007">
    <property type="entry name" value="TPP_DXS"/>
    <property type="match status" value="1"/>
</dbReference>
<dbReference type="CDD" id="cd07033">
    <property type="entry name" value="TPP_PYR_DXS_TK_like"/>
    <property type="match status" value="1"/>
</dbReference>
<dbReference type="FunFam" id="3.40.50.920:FF:000002">
    <property type="entry name" value="1-deoxy-D-xylulose-5-phosphate synthase"/>
    <property type="match status" value="1"/>
</dbReference>
<dbReference type="FunFam" id="3.40.50.970:FF:000005">
    <property type="entry name" value="1-deoxy-D-xylulose-5-phosphate synthase"/>
    <property type="match status" value="1"/>
</dbReference>
<dbReference type="Gene3D" id="3.40.50.920">
    <property type="match status" value="1"/>
</dbReference>
<dbReference type="Gene3D" id="3.40.50.970">
    <property type="match status" value="2"/>
</dbReference>
<dbReference type="HAMAP" id="MF_00315">
    <property type="entry name" value="DXP_synth"/>
    <property type="match status" value="1"/>
</dbReference>
<dbReference type="InterPro" id="IPR005477">
    <property type="entry name" value="Dxylulose-5-P_synthase"/>
</dbReference>
<dbReference type="InterPro" id="IPR029061">
    <property type="entry name" value="THDP-binding"/>
</dbReference>
<dbReference type="InterPro" id="IPR009014">
    <property type="entry name" value="Transketo_C/PFOR_II"/>
</dbReference>
<dbReference type="InterPro" id="IPR005475">
    <property type="entry name" value="Transketolase-like_Pyr-bd"/>
</dbReference>
<dbReference type="InterPro" id="IPR020826">
    <property type="entry name" value="Transketolase_BS"/>
</dbReference>
<dbReference type="InterPro" id="IPR033248">
    <property type="entry name" value="Transketolase_C"/>
</dbReference>
<dbReference type="InterPro" id="IPR049557">
    <property type="entry name" value="Transketolase_CS"/>
</dbReference>
<dbReference type="NCBIfam" id="TIGR00204">
    <property type="entry name" value="dxs"/>
    <property type="match status" value="1"/>
</dbReference>
<dbReference type="NCBIfam" id="NF003933">
    <property type="entry name" value="PRK05444.2-2"/>
    <property type="match status" value="1"/>
</dbReference>
<dbReference type="PANTHER" id="PTHR43322">
    <property type="entry name" value="1-D-DEOXYXYLULOSE 5-PHOSPHATE SYNTHASE-RELATED"/>
    <property type="match status" value="1"/>
</dbReference>
<dbReference type="PANTHER" id="PTHR43322:SF5">
    <property type="entry name" value="1-DEOXY-D-XYLULOSE-5-PHOSPHATE SYNTHASE, CHLOROPLASTIC"/>
    <property type="match status" value="1"/>
</dbReference>
<dbReference type="Pfam" id="PF13292">
    <property type="entry name" value="DXP_synthase_N"/>
    <property type="match status" value="1"/>
</dbReference>
<dbReference type="Pfam" id="PF02779">
    <property type="entry name" value="Transket_pyr"/>
    <property type="match status" value="1"/>
</dbReference>
<dbReference type="Pfam" id="PF02780">
    <property type="entry name" value="Transketolase_C"/>
    <property type="match status" value="1"/>
</dbReference>
<dbReference type="SMART" id="SM00861">
    <property type="entry name" value="Transket_pyr"/>
    <property type="match status" value="1"/>
</dbReference>
<dbReference type="SUPFAM" id="SSF52518">
    <property type="entry name" value="Thiamin diphosphate-binding fold (THDP-binding)"/>
    <property type="match status" value="2"/>
</dbReference>
<dbReference type="SUPFAM" id="SSF52922">
    <property type="entry name" value="TK C-terminal domain-like"/>
    <property type="match status" value="1"/>
</dbReference>
<dbReference type="PROSITE" id="PS00801">
    <property type="entry name" value="TRANSKETOLASE_1"/>
    <property type="match status" value="1"/>
</dbReference>
<dbReference type="PROSITE" id="PS00802">
    <property type="entry name" value="TRANSKETOLASE_2"/>
    <property type="match status" value="1"/>
</dbReference>
<organism>
    <name type="scientific">Salmonella paratyphi A (strain AKU_12601)</name>
    <dbReference type="NCBI Taxonomy" id="554290"/>
    <lineage>
        <taxon>Bacteria</taxon>
        <taxon>Pseudomonadati</taxon>
        <taxon>Pseudomonadota</taxon>
        <taxon>Gammaproteobacteria</taxon>
        <taxon>Enterobacterales</taxon>
        <taxon>Enterobacteriaceae</taxon>
        <taxon>Salmonella</taxon>
    </lineage>
</organism>
<reference key="1">
    <citation type="journal article" date="2009" name="BMC Genomics">
        <title>Pseudogene accumulation in the evolutionary histories of Salmonella enterica serovars Paratyphi A and Typhi.</title>
        <authorList>
            <person name="Holt K.E."/>
            <person name="Thomson N.R."/>
            <person name="Wain J."/>
            <person name="Langridge G.C."/>
            <person name="Hasan R."/>
            <person name="Bhutta Z.A."/>
            <person name="Quail M.A."/>
            <person name="Norbertczak H."/>
            <person name="Walker D."/>
            <person name="Simmonds M."/>
            <person name="White B."/>
            <person name="Bason N."/>
            <person name="Mungall K."/>
            <person name="Dougan G."/>
            <person name="Parkhill J."/>
        </authorList>
    </citation>
    <scope>NUCLEOTIDE SEQUENCE [LARGE SCALE GENOMIC DNA]</scope>
    <source>
        <strain>AKU_12601</strain>
    </source>
</reference>
<keyword id="KW-0414">Isoprene biosynthesis</keyword>
<keyword id="KW-0460">Magnesium</keyword>
<keyword id="KW-0479">Metal-binding</keyword>
<keyword id="KW-0784">Thiamine biosynthesis</keyword>
<keyword id="KW-0786">Thiamine pyrophosphate</keyword>
<keyword id="KW-0808">Transferase</keyword>
<name>DXS_SALPK</name>
<sequence>MSFDIAKYPTLALVDSTQELRLLPKESLPKLCDELRRYLLDSVSRSSGHFASGLGTVELTVALHYVYNTPFDQLIWDVGHQAYPHKILTGRRDKIGTIRQKGGLHPFPWRGESEYDVLSVGHSSTSISAGIGIAVAAEKEGKDRHTVCVIGDGAITAGMAFEAMNHAGDIRPDMLVILNDNEMSISENVGALNNHLAQLLSGKLYSSLREGGKKVFSGVPPIKELLKRTEEHIKGMVVPGTLFEELGFNYIGPVDGHDVMGLISTLKNMRDLKGPQFLHIMTKKGRGYEPAEKDPITFHAVPKFDPSSGCLPKSSGGLPGYSKIFGDWLCETAAKDSKLMAITPAMREGSGMVEFSRKFPDRYFDVAIAEQHAVTFAAGLAIGGYKPVVAIYSTFLQRAYDQVIHDVAIQKLPVMFAIDRAGIVGADGQTHQGAFDLSYLRCIPDMVIMTPSDENECRQMLFTGYHYNDGPTAVRYPRGNAQGVALTPLEKLPIGKGLVKRHGEKLAILNFGTLMPEAAKVAEALNATLVDMRFVKPLDDTLILEMAAQHDALVTLEENAIMGGAGSGVNEVLMAHRKPVPVLNIGLPDLFIPQGTQEEARAELGLDAAGIEAKIKAWQA</sequence>